<name>EFTS_CRYNB</name>
<reference key="1">
    <citation type="journal article" date="2005" name="Science">
        <title>The genome of the basidiomycetous yeast and human pathogen Cryptococcus neoformans.</title>
        <authorList>
            <person name="Loftus B.J."/>
            <person name="Fung E."/>
            <person name="Roncaglia P."/>
            <person name="Rowley D."/>
            <person name="Amedeo P."/>
            <person name="Bruno D."/>
            <person name="Vamathevan J."/>
            <person name="Miranda M."/>
            <person name="Anderson I.J."/>
            <person name="Fraser J.A."/>
            <person name="Allen J.E."/>
            <person name="Bosdet I.E."/>
            <person name="Brent M.R."/>
            <person name="Chiu R."/>
            <person name="Doering T.L."/>
            <person name="Donlin M.J."/>
            <person name="D'Souza C.A."/>
            <person name="Fox D.S."/>
            <person name="Grinberg V."/>
            <person name="Fu J."/>
            <person name="Fukushima M."/>
            <person name="Haas B.J."/>
            <person name="Huang J.C."/>
            <person name="Janbon G."/>
            <person name="Jones S.J.M."/>
            <person name="Koo H.L."/>
            <person name="Krzywinski M.I."/>
            <person name="Kwon-Chung K.J."/>
            <person name="Lengeler K.B."/>
            <person name="Maiti R."/>
            <person name="Marra M.A."/>
            <person name="Marra R.E."/>
            <person name="Mathewson C.A."/>
            <person name="Mitchell T.G."/>
            <person name="Pertea M."/>
            <person name="Riggs F.R."/>
            <person name="Salzberg S.L."/>
            <person name="Schein J.E."/>
            <person name="Shvartsbeyn A."/>
            <person name="Shin H."/>
            <person name="Shumway M."/>
            <person name="Specht C.A."/>
            <person name="Suh B.B."/>
            <person name="Tenney A."/>
            <person name="Utterback T.R."/>
            <person name="Wickes B.L."/>
            <person name="Wortman J.R."/>
            <person name="Wye N.H."/>
            <person name="Kronstad J.W."/>
            <person name="Lodge J.K."/>
            <person name="Heitman J."/>
            <person name="Davis R.W."/>
            <person name="Fraser C.M."/>
            <person name="Hyman R.W."/>
        </authorList>
    </citation>
    <scope>NUCLEOTIDE SEQUENCE [LARGE SCALE GENOMIC DNA]</scope>
    <source>
        <strain>B-3501A</strain>
    </source>
</reference>
<evidence type="ECO:0000255" key="1">
    <source>
        <dbReference type="HAMAP-Rule" id="MF_03135"/>
    </source>
</evidence>
<dbReference type="EMBL" id="AAEY01000013">
    <property type="protein sequence ID" value="EAL22255.1"/>
    <property type="molecule type" value="Genomic_DNA"/>
</dbReference>
<dbReference type="RefSeq" id="XP_776902.1">
    <property type="nucleotide sequence ID" value="XM_771809.1"/>
</dbReference>
<dbReference type="SMR" id="P0CN39"/>
<dbReference type="EnsemblFungi" id="AAW42347">
    <property type="protein sequence ID" value="AAW42347"/>
    <property type="gene ID" value="CNC03280"/>
</dbReference>
<dbReference type="GeneID" id="4935058"/>
<dbReference type="KEGG" id="cnb:CNBC3930"/>
<dbReference type="VEuPathDB" id="FungiDB:CNBC3930"/>
<dbReference type="HOGENOM" id="CLU_047155_4_1_1"/>
<dbReference type="OrthoDB" id="5915at5206"/>
<dbReference type="GO" id="GO:0005739">
    <property type="term" value="C:mitochondrion"/>
    <property type="evidence" value="ECO:0007669"/>
    <property type="project" value="UniProtKB-SubCell"/>
</dbReference>
<dbReference type="GO" id="GO:0003746">
    <property type="term" value="F:translation elongation factor activity"/>
    <property type="evidence" value="ECO:0007669"/>
    <property type="project" value="UniProtKB-UniRule"/>
</dbReference>
<dbReference type="GO" id="GO:0070125">
    <property type="term" value="P:mitochondrial translational elongation"/>
    <property type="evidence" value="ECO:0007669"/>
    <property type="project" value="TreeGrafter"/>
</dbReference>
<dbReference type="Gene3D" id="1.10.8.10">
    <property type="entry name" value="DNA helicase RuvA subunit, C-terminal domain"/>
    <property type="match status" value="1"/>
</dbReference>
<dbReference type="Gene3D" id="3.30.479.20">
    <property type="entry name" value="Elongation factor Ts, dimerisation domain"/>
    <property type="match status" value="2"/>
</dbReference>
<dbReference type="HAMAP" id="MF_00050">
    <property type="entry name" value="EF_Ts"/>
    <property type="match status" value="1"/>
</dbReference>
<dbReference type="InterPro" id="IPR036402">
    <property type="entry name" value="EF-Ts_dimer_sf"/>
</dbReference>
<dbReference type="InterPro" id="IPR001816">
    <property type="entry name" value="Transl_elong_EFTs/EF1B"/>
</dbReference>
<dbReference type="InterPro" id="IPR014039">
    <property type="entry name" value="Transl_elong_EFTs/EF1B_dimer"/>
</dbReference>
<dbReference type="InterPro" id="IPR009060">
    <property type="entry name" value="UBA-like_sf"/>
</dbReference>
<dbReference type="PANTHER" id="PTHR11741">
    <property type="entry name" value="ELONGATION FACTOR TS"/>
    <property type="match status" value="1"/>
</dbReference>
<dbReference type="PANTHER" id="PTHR11741:SF0">
    <property type="entry name" value="ELONGATION FACTOR TS, MITOCHONDRIAL"/>
    <property type="match status" value="1"/>
</dbReference>
<dbReference type="Pfam" id="PF00889">
    <property type="entry name" value="EF_TS"/>
    <property type="match status" value="1"/>
</dbReference>
<dbReference type="SUPFAM" id="SSF54713">
    <property type="entry name" value="Elongation factor Ts (EF-Ts), dimerisation domain"/>
    <property type="match status" value="1"/>
</dbReference>
<dbReference type="SUPFAM" id="SSF46934">
    <property type="entry name" value="UBA-like"/>
    <property type="match status" value="1"/>
</dbReference>
<organism>
    <name type="scientific">Cryptococcus neoformans var. neoformans serotype D (strain B-3501A)</name>
    <name type="common">Filobasidiella neoformans</name>
    <dbReference type="NCBI Taxonomy" id="283643"/>
    <lineage>
        <taxon>Eukaryota</taxon>
        <taxon>Fungi</taxon>
        <taxon>Dikarya</taxon>
        <taxon>Basidiomycota</taxon>
        <taxon>Agaricomycotina</taxon>
        <taxon>Tremellomycetes</taxon>
        <taxon>Tremellales</taxon>
        <taxon>Cryptococcaceae</taxon>
        <taxon>Cryptococcus</taxon>
        <taxon>Cryptococcus neoformans species complex</taxon>
    </lineage>
</organism>
<sequence>MALLSAAPRALRLPRRLPLGAALPALRALATPAAAQKVPVSLIAALRKQHPVPLAQAREALERSGLDLAAALDYLRTSTSASAEKKAAKVSGRDTNEGLIAISLLGGKRVGMIHLACETDFVARNQVFLDTARGVAETTAFLDVPGDHEKPQIASSPYAFDPILDFPTESLLSAPLISLPAADTADGSLSPLPTSEPTTIKQSLLSSLAQTGENLKLLRAVSFAAPFPSTPDVRFVPGGYAHGGITDKEGKVGGIVVLSVTSADPEKPIASIIHGPGGDDLEKAAESLARTVARQVVGFPTKVIDRGDRAVDDEEVLMEQPFMMFNGDSRSVKDVLAEWGKERGVVLRVVGMRRWAVGDEIEIKEKETDA</sequence>
<gene>
    <name evidence="1" type="primary">TSF1</name>
    <name type="ordered locus">CNBC3930</name>
</gene>
<accession>P0CN39</accession>
<accession>Q55VU4</accession>
<accession>Q5KKE5</accession>
<feature type="transit peptide" description="Mitochondrion" evidence="1">
    <location>
        <begin position="1"/>
        <end position="29"/>
    </location>
</feature>
<feature type="chain" id="PRO_0000410073" description="Elongation factor Ts, mitochondrial">
    <location>
        <begin position="30"/>
        <end position="370"/>
    </location>
</feature>
<proteinExistence type="inferred from homology"/>
<comment type="function">
    <text evidence="1">Associates with the EF-Tu.GDP complex and induces the exchange of GDP to GTP. It remains bound to the aminoacyl-tRNA.EF-Tu.GTP complex up to the GTP hydrolysis stage on the ribosome.</text>
</comment>
<comment type="subcellular location">
    <subcellularLocation>
        <location evidence="1">Mitochondrion</location>
    </subcellularLocation>
</comment>
<comment type="similarity">
    <text evidence="1">Belongs to the EF-Ts family.</text>
</comment>
<protein>
    <recommendedName>
        <fullName evidence="1">Elongation factor Ts, mitochondrial</fullName>
        <shortName evidence="1">EF-Ts</shortName>
        <shortName evidence="1">EF-TsMt</shortName>
    </recommendedName>
</protein>
<keyword id="KW-0251">Elongation factor</keyword>
<keyword id="KW-0496">Mitochondrion</keyword>
<keyword id="KW-0648">Protein biosynthesis</keyword>
<keyword id="KW-0809">Transit peptide</keyword>